<feature type="chain" id="PRO_0000326718" description="Acylphosphatase">
    <location>
        <begin position="1"/>
        <end position="93"/>
    </location>
</feature>
<feature type="domain" description="Acylphosphatase-like" evidence="1">
    <location>
        <begin position="6"/>
        <end position="92"/>
    </location>
</feature>
<feature type="active site" evidence="1">
    <location>
        <position position="21"/>
    </location>
</feature>
<feature type="active site" evidence="1">
    <location>
        <position position="39"/>
    </location>
</feature>
<organism>
    <name type="scientific">Gloeobacter violaceus (strain ATCC 29082 / PCC 7421)</name>
    <dbReference type="NCBI Taxonomy" id="251221"/>
    <lineage>
        <taxon>Bacteria</taxon>
        <taxon>Bacillati</taxon>
        <taxon>Cyanobacteriota</taxon>
        <taxon>Cyanophyceae</taxon>
        <taxon>Gloeobacterales</taxon>
        <taxon>Gloeobacteraceae</taxon>
        <taxon>Gloeobacter</taxon>
    </lineage>
</organism>
<accession>Q7NE87</accession>
<comment type="catalytic activity">
    <reaction>
        <text>an acyl phosphate + H2O = a carboxylate + phosphate + H(+)</text>
        <dbReference type="Rhea" id="RHEA:14965"/>
        <dbReference type="ChEBI" id="CHEBI:15377"/>
        <dbReference type="ChEBI" id="CHEBI:15378"/>
        <dbReference type="ChEBI" id="CHEBI:29067"/>
        <dbReference type="ChEBI" id="CHEBI:43474"/>
        <dbReference type="ChEBI" id="CHEBI:59918"/>
        <dbReference type="EC" id="3.6.1.7"/>
    </reaction>
</comment>
<comment type="similarity">
    <text evidence="2">Belongs to the acylphosphatase family.</text>
</comment>
<gene>
    <name type="primary">acyP</name>
    <name type="ordered locus">gsr3993</name>
</gene>
<evidence type="ECO:0000255" key="1">
    <source>
        <dbReference type="PROSITE-ProRule" id="PRU00520"/>
    </source>
</evidence>
<evidence type="ECO:0000305" key="2"/>
<protein>
    <recommendedName>
        <fullName>Acylphosphatase</fullName>
        <ecNumber>3.6.1.7</ecNumber>
    </recommendedName>
    <alternativeName>
        <fullName>Acylphosphate phosphohydrolase</fullName>
    </alternativeName>
</protein>
<reference key="1">
    <citation type="journal article" date="2003" name="DNA Res.">
        <title>Complete genome structure of Gloeobacter violaceus PCC 7421, a cyanobacterium that lacks thylakoids.</title>
        <authorList>
            <person name="Nakamura Y."/>
            <person name="Kaneko T."/>
            <person name="Sato S."/>
            <person name="Mimuro M."/>
            <person name="Miyashita H."/>
            <person name="Tsuchiya T."/>
            <person name="Sasamoto S."/>
            <person name="Watanabe A."/>
            <person name="Kawashima K."/>
            <person name="Kishida Y."/>
            <person name="Kiyokawa C."/>
            <person name="Kohara M."/>
            <person name="Matsumoto M."/>
            <person name="Matsuno A."/>
            <person name="Nakazaki N."/>
            <person name="Shimpo S."/>
            <person name="Takeuchi C."/>
            <person name="Yamada M."/>
            <person name="Tabata S."/>
        </authorList>
    </citation>
    <scope>NUCLEOTIDE SEQUENCE [LARGE SCALE GENOMIC DNA]</scope>
    <source>
        <strain>ATCC 29082 / PCC 7421</strain>
    </source>
</reference>
<proteinExistence type="inferred from homology"/>
<sequence length="93" mass="10222">MATAVRAHVWVGGKVQGVYFRAATREAAQRQGVAGWVRNLPDGRVEAVFEGPPAAVQRLIDWCRQGPPAAVVEQLRVAYELPEGLTHFEVLRS</sequence>
<dbReference type="EC" id="3.6.1.7"/>
<dbReference type="EMBL" id="BA000045">
    <property type="protein sequence ID" value="BAC91934.1"/>
    <property type="molecule type" value="Genomic_DNA"/>
</dbReference>
<dbReference type="RefSeq" id="NP_926939.1">
    <property type="nucleotide sequence ID" value="NC_005125.1"/>
</dbReference>
<dbReference type="RefSeq" id="WP_011143981.1">
    <property type="nucleotide sequence ID" value="NC_005125.1"/>
</dbReference>
<dbReference type="SMR" id="Q7NE87"/>
<dbReference type="FunCoup" id="Q7NE87">
    <property type="interactions" value="18"/>
</dbReference>
<dbReference type="STRING" id="251221.gene:10761510"/>
<dbReference type="EnsemblBacteria" id="BAC91934">
    <property type="protein sequence ID" value="BAC91934"/>
    <property type="gene ID" value="BAC91934"/>
</dbReference>
<dbReference type="KEGG" id="gvi:gsr3993"/>
<dbReference type="PATRIC" id="fig|251221.4.peg.4026"/>
<dbReference type="eggNOG" id="COG1254">
    <property type="taxonomic scope" value="Bacteria"/>
</dbReference>
<dbReference type="HOGENOM" id="CLU_141932_3_2_3"/>
<dbReference type="InParanoid" id="Q7NE87"/>
<dbReference type="OrthoDB" id="9808093at2"/>
<dbReference type="PhylomeDB" id="Q7NE87"/>
<dbReference type="Proteomes" id="UP000000557">
    <property type="component" value="Chromosome"/>
</dbReference>
<dbReference type="GO" id="GO:0003998">
    <property type="term" value="F:acylphosphatase activity"/>
    <property type="evidence" value="ECO:0000318"/>
    <property type="project" value="GO_Central"/>
</dbReference>
<dbReference type="Gene3D" id="3.30.70.100">
    <property type="match status" value="1"/>
</dbReference>
<dbReference type="InterPro" id="IPR020456">
    <property type="entry name" value="Acylphosphatase"/>
</dbReference>
<dbReference type="InterPro" id="IPR001792">
    <property type="entry name" value="Acylphosphatase-like_dom"/>
</dbReference>
<dbReference type="InterPro" id="IPR036046">
    <property type="entry name" value="Acylphosphatase-like_dom_sf"/>
</dbReference>
<dbReference type="InterPro" id="IPR017968">
    <property type="entry name" value="Acylphosphatase_CS"/>
</dbReference>
<dbReference type="NCBIfam" id="NF011016">
    <property type="entry name" value="PRK14444.1"/>
    <property type="match status" value="1"/>
</dbReference>
<dbReference type="PANTHER" id="PTHR47268">
    <property type="entry name" value="ACYLPHOSPHATASE"/>
    <property type="match status" value="1"/>
</dbReference>
<dbReference type="PANTHER" id="PTHR47268:SF4">
    <property type="entry name" value="ACYLPHOSPHATASE"/>
    <property type="match status" value="1"/>
</dbReference>
<dbReference type="Pfam" id="PF00708">
    <property type="entry name" value="Acylphosphatase"/>
    <property type="match status" value="1"/>
</dbReference>
<dbReference type="PRINTS" id="PR00112">
    <property type="entry name" value="ACYLPHPHTASE"/>
</dbReference>
<dbReference type="SUPFAM" id="SSF54975">
    <property type="entry name" value="Acylphosphatase/BLUF domain-like"/>
    <property type="match status" value="1"/>
</dbReference>
<dbReference type="PROSITE" id="PS00150">
    <property type="entry name" value="ACYLPHOSPHATASE_1"/>
    <property type="match status" value="1"/>
</dbReference>
<dbReference type="PROSITE" id="PS00151">
    <property type="entry name" value="ACYLPHOSPHATASE_2"/>
    <property type="match status" value="1"/>
</dbReference>
<dbReference type="PROSITE" id="PS51160">
    <property type="entry name" value="ACYLPHOSPHATASE_3"/>
    <property type="match status" value="1"/>
</dbReference>
<keyword id="KW-0378">Hydrolase</keyword>
<keyword id="KW-1185">Reference proteome</keyword>
<name>ACYP_GLOVI</name>